<sequence>MSLYLKAEKIQSWRVLIMACAGFIFNTTEFVPVAMLSDIAQSFDMQTADTGLMMTVYAWTVLIMSLPAMLATGNMERKSLLIKLFIIFIVGHILSVIAWNFWILLLARMCIALAHSVFWSITASLVMRISPKHKKTQALGMLAIGTALATILGLPIGRIVGQLVGWRVTFGIIAVLALSIMFLIIRLLPNLPSKNAGSIASLPLLAKRPLLLWLYVTTAIVISAHFTAYTYIEPFMIDVGHLDPNFATAVLLVFGFSGIAASLLFNRLYRFAPTKFIVVSMSLLMFSLLLLLFSTKTIIAMFSLVFIWGIGISCIGLSLQMRVLKLAPDATDVATAIYSGIFNAGIGAGALFGNLATTYLGLNEIGYTGAALGLIGFIIFITTHLKYRHTFLLQNK</sequence>
<gene>
    <name evidence="1" type="primary">sotB</name>
    <name type="ordered locus">HI_0135</name>
</gene>
<name>SOTB_HAEIN</name>
<feature type="chain" id="PRO_0000209327" description="Probable sugar efflux transporter">
    <location>
        <begin position="1"/>
        <end position="396"/>
    </location>
</feature>
<feature type="transmembrane region" description="Helical" evidence="1">
    <location>
        <begin position="15"/>
        <end position="35"/>
    </location>
</feature>
<feature type="transmembrane region" description="Helical" evidence="1">
    <location>
        <begin position="51"/>
        <end position="71"/>
    </location>
</feature>
<feature type="transmembrane region" description="Helical" evidence="1">
    <location>
        <begin position="84"/>
        <end position="104"/>
    </location>
</feature>
<feature type="transmembrane region" description="Helical" evidence="1">
    <location>
        <begin position="109"/>
        <end position="129"/>
    </location>
</feature>
<feature type="transmembrane region" description="Helical" evidence="1">
    <location>
        <begin position="137"/>
        <end position="157"/>
    </location>
</feature>
<feature type="transmembrane region" description="Helical" evidence="1">
    <location>
        <begin position="168"/>
        <end position="188"/>
    </location>
</feature>
<feature type="transmembrane region" description="Helical" evidence="1">
    <location>
        <begin position="209"/>
        <end position="229"/>
    </location>
</feature>
<feature type="transmembrane region" description="Helical" evidence="1">
    <location>
        <begin position="245"/>
        <end position="265"/>
    </location>
</feature>
<feature type="transmembrane region" description="Helical" evidence="1">
    <location>
        <begin position="273"/>
        <end position="293"/>
    </location>
</feature>
<feature type="transmembrane region" description="Helical" evidence="1">
    <location>
        <begin position="297"/>
        <end position="317"/>
    </location>
</feature>
<feature type="transmembrane region" description="Helical" evidence="1">
    <location>
        <begin position="333"/>
        <end position="353"/>
    </location>
</feature>
<feature type="transmembrane region" description="Helical" evidence="1">
    <location>
        <begin position="365"/>
        <end position="385"/>
    </location>
</feature>
<organism>
    <name type="scientific">Haemophilus influenzae (strain ATCC 51907 / DSM 11121 / KW20 / Rd)</name>
    <dbReference type="NCBI Taxonomy" id="71421"/>
    <lineage>
        <taxon>Bacteria</taxon>
        <taxon>Pseudomonadati</taxon>
        <taxon>Pseudomonadota</taxon>
        <taxon>Gammaproteobacteria</taxon>
        <taxon>Pasteurellales</taxon>
        <taxon>Pasteurellaceae</taxon>
        <taxon>Haemophilus</taxon>
    </lineage>
</organism>
<comment type="function">
    <text evidence="1">Involved in the efflux of sugars. The physiological role may be the reduction of the intracellular concentration of toxic sugars or sugar metabolites.</text>
</comment>
<comment type="subcellular location">
    <subcellularLocation>
        <location evidence="1">Cell inner membrane</location>
        <topology evidence="1">Multi-pass membrane protein</topology>
    </subcellularLocation>
</comment>
<comment type="similarity">
    <text evidence="1">Belongs to the major facilitator superfamily. SotB (TC 2.A.1.2) family.</text>
</comment>
<keyword id="KW-0997">Cell inner membrane</keyword>
<keyword id="KW-1003">Cell membrane</keyword>
<keyword id="KW-0472">Membrane</keyword>
<keyword id="KW-1185">Reference proteome</keyword>
<keyword id="KW-0762">Sugar transport</keyword>
<keyword id="KW-0812">Transmembrane</keyword>
<keyword id="KW-1133">Transmembrane helix</keyword>
<keyword id="KW-0813">Transport</keyword>
<protein>
    <recommendedName>
        <fullName evidence="1">Probable sugar efflux transporter</fullName>
    </recommendedName>
</protein>
<proteinExistence type="inferred from homology"/>
<accession>P44535</accession>
<dbReference type="EMBL" id="L42023">
    <property type="protein sequence ID" value="AAC21806.1"/>
    <property type="molecule type" value="Genomic_DNA"/>
</dbReference>
<dbReference type="PIR" id="E64143">
    <property type="entry name" value="E64143"/>
</dbReference>
<dbReference type="RefSeq" id="NP_438304.1">
    <property type="nucleotide sequence ID" value="NC_000907.1"/>
</dbReference>
<dbReference type="SMR" id="P44535"/>
<dbReference type="STRING" id="71421.HI_0135"/>
<dbReference type="EnsemblBacteria" id="AAC21806">
    <property type="protein sequence ID" value="AAC21806"/>
    <property type="gene ID" value="HI_0135"/>
</dbReference>
<dbReference type="KEGG" id="hin:HI_0135"/>
<dbReference type="PATRIC" id="fig|71421.8.peg.137"/>
<dbReference type="eggNOG" id="COG2814">
    <property type="taxonomic scope" value="Bacteria"/>
</dbReference>
<dbReference type="HOGENOM" id="CLU_001265_61_1_6"/>
<dbReference type="OrthoDB" id="9788453at2"/>
<dbReference type="PhylomeDB" id="P44535"/>
<dbReference type="BioCyc" id="HINF71421:G1GJ1-145-MONOMER"/>
<dbReference type="Proteomes" id="UP000000579">
    <property type="component" value="Chromosome"/>
</dbReference>
<dbReference type="GO" id="GO:0005886">
    <property type="term" value="C:plasma membrane"/>
    <property type="evidence" value="ECO:0000318"/>
    <property type="project" value="GO_Central"/>
</dbReference>
<dbReference type="GO" id="GO:0015144">
    <property type="term" value="F:carbohydrate transmembrane transporter activity"/>
    <property type="evidence" value="ECO:0007669"/>
    <property type="project" value="UniProtKB-UniRule"/>
</dbReference>
<dbReference type="GO" id="GO:0022857">
    <property type="term" value="F:transmembrane transporter activity"/>
    <property type="evidence" value="ECO:0000318"/>
    <property type="project" value="GO_Central"/>
</dbReference>
<dbReference type="GO" id="GO:0055085">
    <property type="term" value="P:transmembrane transport"/>
    <property type="evidence" value="ECO:0000318"/>
    <property type="project" value="GO_Central"/>
</dbReference>
<dbReference type="CDD" id="cd17324">
    <property type="entry name" value="MFS_NepI_like"/>
    <property type="match status" value="1"/>
</dbReference>
<dbReference type="Gene3D" id="1.20.1250.20">
    <property type="entry name" value="MFS general substrate transporter like domains"/>
    <property type="match status" value="1"/>
</dbReference>
<dbReference type="HAMAP" id="MF_00517">
    <property type="entry name" value="MFS_SotB"/>
    <property type="match status" value="1"/>
</dbReference>
<dbReference type="InterPro" id="IPR011701">
    <property type="entry name" value="MFS"/>
</dbReference>
<dbReference type="InterPro" id="IPR020846">
    <property type="entry name" value="MFS_dom"/>
</dbReference>
<dbReference type="InterPro" id="IPR050189">
    <property type="entry name" value="MFS_Efflux_Transporters"/>
</dbReference>
<dbReference type="InterPro" id="IPR036259">
    <property type="entry name" value="MFS_trans_sf"/>
</dbReference>
<dbReference type="InterPro" id="IPR023495">
    <property type="entry name" value="Sugar_effux_transptr_put"/>
</dbReference>
<dbReference type="NCBIfam" id="NF002921">
    <property type="entry name" value="PRK03545.1"/>
    <property type="match status" value="1"/>
</dbReference>
<dbReference type="PANTHER" id="PTHR43124">
    <property type="entry name" value="PURINE EFFLUX PUMP PBUE"/>
    <property type="match status" value="1"/>
</dbReference>
<dbReference type="PANTHER" id="PTHR43124:SF4">
    <property type="entry name" value="SUGAR EFFLUX TRANSPORTER"/>
    <property type="match status" value="1"/>
</dbReference>
<dbReference type="Pfam" id="PF07690">
    <property type="entry name" value="MFS_1"/>
    <property type="match status" value="1"/>
</dbReference>
<dbReference type="SUPFAM" id="SSF103473">
    <property type="entry name" value="MFS general substrate transporter"/>
    <property type="match status" value="1"/>
</dbReference>
<dbReference type="PROSITE" id="PS50850">
    <property type="entry name" value="MFS"/>
    <property type="match status" value="1"/>
</dbReference>
<reference key="1">
    <citation type="journal article" date="1995" name="Science">
        <title>Whole-genome random sequencing and assembly of Haemophilus influenzae Rd.</title>
        <authorList>
            <person name="Fleischmann R.D."/>
            <person name="Adams M.D."/>
            <person name="White O."/>
            <person name="Clayton R.A."/>
            <person name="Kirkness E.F."/>
            <person name="Kerlavage A.R."/>
            <person name="Bult C.J."/>
            <person name="Tomb J.-F."/>
            <person name="Dougherty B.A."/>
            <person name="Merrick J.M."/>
            <person name="McKenney K."/>
            <person name="Sutton G.G."/>
            <person name="FitzHugh W."/>
            <person name="Fields C.A."/>
            <person name="Gocayne J.D."/>
            <person name="Scott J.D."/>
            <person name="Shirley R."/>
            <person name="Liu L.-I."/>
            <person name="Glodek A."/>
            <person name="Kelley J.M."/>
            <person name="Weidman J.F."/>
            <person name="Phillips C.A."/>
            <person name="Spriggs T."/>
            <person name="Hedblom E."/>
            <person name="Cotton M.D."/>
            <person name="Utterback T.R."/>
            <person name="Hanna M.C."/>
            <person name="Nguyen D.T."/>
            <person name="Saudek D.M."/>
            <person name="Brandon R.C."/>
            <person name="Fine L.D."/>
            <person name="Fritchman J.L."/>
            <person name="Fuhrmann J.L."/>
            <person name="Geoghagen N.S.M."/>
            <person name="Gnehm C.L."/>
            <person name="McDonald L.A."/>
            <person name="Small K.V."/>
            <person name="Fraser C.M."/>
            <person name="Smith H.O."/>
            <person name="Venter J.C."/>
        </authorList>
    </citation>
    <scope>NUCLEOTIDE SEQUENCE [LARGE SCALE GENOMIC DNA]</scope>
    <source>
        <strain>ATCC 51907 / DSM 11121 / KW20 / Rd</strain>
    </source>
</reference>
<evidence type="ECO:0000255" key="1">
    <source>
        <dbReference type="HAMAP-Rule" id="MF_00517"/>
    </source>
</evidence>